<gene>
    <name type="primary">MEKK1</name>
    <name type="ordered locus">At4g08500</name>
    <name type="ORF">T15F16.5</name>
</gene>
<accession>Q39008</accession>
<accession>O81470</accession>
<accession>Q39020</accession>
<accession>Q8W4N5</accession>
<proteinExistence type="evidence at protein level"/>
<name>M3K1_ARATH</name>
<reference key="1">
    <citation type="journal article" date="1996" name="Proc. Natl. Acad. Sci. U.S.A.">
        <title>A gene encoding a mitogen-activated protein kinase kinase kinase is induced simultaneously with genes for a mitogen-activated protein kinase and an S6 ribosomal protein kinase by touch, cold, and water stress in Arabidopsis thaliana.</title>
        <authorList>
            <person name="Mizoguchi T."/>
            <person name="Irie K."/>
            <person name="Hirayama T."/>
            <person name="Hayashida N."/>
            <person name="Yamaguchi-Shinozaki K."/>
            <person name="Matsumoto K."/>
            <person name="Shinozaki K."/>
        </authorList>
    </citation>
    <scope>NUCLEOTIDE SEQUENCE [MRNA]</scope>
    <scope>INDUCTION</scope>
    <source>
        <strain>cv. Columbia</strain>
    </source>
</reference>
<reference key="2">
    <citation type="journal article" date="1999" name="Nature">
        <title>Sequence and analysis of chromosome 4 of the plant Arabidopsis thaliana.</title>
        <authorList>
            <person name="Mayer K.F.X."/>
            <person name="Schueller C."/>
            <person name="Wambutt R."/>
            <person name="Murphy G."/>
            <person name="Volckaert G."/>
            <person name="Pohl T."/>
            <person name="Duesterhoeft A."/>
            <person name="Stiekema W."/>
            <person name="Entian K.-D."/>
            <person name="Terryn N."/>
            <person name="Harris B."/>
            <person name="Ansorge W."/>
            <person name="Brandt P."/>
            <person name="Grivell L.A."/>
            <person name="Rieger M."/>
            <person name="Weichselgartner M."/>
            <person name="de Simone V."/>
            <person name="Obermaier B."/>
            <person name="Mache R."/>
            <person name="Mueller M."/>
            <person name="Kreis M."/>
            <person name="Delseny M."/>
            <person name="Puigdomenech P."/>
            <person name="Watson M."/>
            <person name="Schmidtheini T."/>
            <person name="Reichert B."/>
            <person name="Portetelle D."/>
            <person name="Perez-Alonso M."/>
            <person name="Boutry M."/>
            <person name="Bancroft I."/>
            <person name="Vos P."/>
            <person name="Hoheisel J."/>
            <person name="Zimmermann W."/>
            <person name="Wedler H."/>
            <person name="Ridley P."/>
            <person name="Langham S.-A."/>
            <person name="McCullagh B."/>
            <person name="Bilham L."/>
            <person name="Robben J."/>
            <person name="van der Schueren J."/>
            <person name="Grymonprez B."/>
            <person name="Chuang Y.-J."/>
            <person name="Vandenbussche F."/>
            <person name="Braeken M."/>
            <person name="Weltjens I."/>
            <person name="Voet M."/>
            <person name="Bastiaens I."/>
            <person name="Aert R."/>
            <person name="Defoor E."/>
            <person name="Weitzenegger T."/>
            <person name="Bothe G."/>
            <person name="Ramsperger U."/>
            <person name="Hilbert H."/>
            <person name="Braun M."/>
            <person name="Holzer E."/>
            <person name="Brandt A."/>
            <person name="Peters S."/>
            <person name="van Staveren M."/>
            <person name="Dirkse W."/>
            <person name="Mooijman P."/>
            <person name="Klein Lankhorst R."/>
            <person name="Rose M."/>
            <person name="Hauf J."/>
            <person name="Koetter P."/>
            <person name="Berneiser S."/>
            <person name="Hempel S."/>
            <person name="Feldpausch M."/>
            <person name="Lamberth S."/>
            <person name="Van den Daele H."/>
            <person name="De Keyser A."/>
            <person name="Buysshaert C."/>
            <person name="Gielen J."/>
            <person name="Villarroel R."/>
            <person name="De Clercq R."/>
            <person name="van Montagu M."/>
            <person name="Rogers J."/>
            <person name="Cronin A."/>
            <person name="Quail M.A."/>
            <person name="Bray-Allen S."/>
            <person name="Clark L."/>
            <person name="Doggett J."/>
            <person name="Hall S."/>
            <person name="Kay M."/>
            <person name="Lennard N."/>
            <person name="McLay K."/>
            <person name="Mayes R."/>
            <person name="Pettett A."/>
            <person name="Rajandream M.A."/>
            <person name="Lyne M."/>
            <person name="Benes V."/>
            <person name="Rechmann S."/>
            <person name="Borkova D."/>
            <person name="Bloecker H."/>
            <person name="Scharfe M."/>
            <person name="Grimm M."/>
            <person name="Loehnert T.-H."/>
            <person name="Dose S."/>
            <person name="de Haan M."/>
            <person name="Maarse A.C."/>
            <person name="Schaefer M."/>
            <person name="Mueller-Auer S."/>
            <person name="Gabel C."/>
            <person name="Fuchs M."/>
            <person name="Fartmann B."/>
            <person name="Granderath K."/>
            <person name="Dauner D."/>
            <person name="Herzl A."/>
            <person name="Neumann S."/>
            <person name="Argiriou A."/>
            <person name="Vitale D."/>
            <person name="Liguori R."/>
            <person name="Piravandi E."/>
            <person name="Massenet O."/>
            <person name="Quigley F."/>
            <person name="Clabauld G."/>
            <person name="Muendlein A."/>
            <person name="Felber R."/>
            <person name="Schnabl S."/>
            <person name="Hiller R."/>
            <person name="Schmidt W."/>
            <person name="Lecharny A."/>
            <person name="Aubourg S."/>
            <person name="Chefdor F."/>
            <person name="Cooke R."/>
            <person name="Berger C."/>
            <person name="Monfort A."/>
            <person name="Casacuberta E."/>
            <person name="Gibbons T."/>
            <person name="Weber N."/>
            <person name="Vandenbol M."/>
            <person name="Bargues M."/>
            <person name="Terol J."/>
            <person name="Torres A."/>
            <person name="Perez-Perez A."/>
            <person name="Purnelle B."/>
            <person name="Bent E."/>
            <person name="Johnson S."/>
            <person name="Tacon D."/>
            <person name="Jesse T."/>
            <person name="Heijnen L."/>
            <person name="Schwarz S."/>
            <person name="Scholler P."/>
            <person name="Heber S."/>
            <person name="Francs P."/>
            <person name="Bielke C."/>
            <person name="Frishman D."/>
            <person name="Haase D."/>
            <person name="Lemcke K."/>
            <person name="Mewes H.-W."/>
            <person name="Stocker S."/>
            <person name="Zaccaria P."/>
            <person name="Bevan M."/>
            <person name="Wilson R.K."/>
            <person name="de la Bastide M."/>
            <person name="Habermann K."/>
            <person name="Parnell L."/>
            <person name="Dedhia N."/>
            <person name="Gnoj L."/>
            <person name="Schutz K."/>
            <person name="Huang E."/>
            <person name="Spiegel L."/>
            <person name="Sekhon M."/>
            <person name="Murray J."/>
            <person name="Sheet P."/>
            <person name="Cordes M."/>
            <person name="Abu-Threideh J."/>
            <person name="Stoneking T."/>
            <person name="Kalicki J."/>
            <person name="Graves T."/>
            <person name="Harmon G."/>
            <person name="Edwards J."/>
            <person name="Latreille P."/>
            <person name="Courtney L."/>
            <person name="Cloud J."/>
            <person name="Abbott A."/>
            <person name="Scott K."/>
            <person name="Johnson D."/>
            <person name="Minx P."/>
            <person name="Bentley D."/>
            <person name="Fulton B."/>
            <person name="Miller N."/>
            <person name="Greco T."/>
            <person name="Kemp K."/>
            <person name="Kramer J."/>
            <person name="Fulton L."/>
            <person name="Mardis E."/>
            <person name="Dante M."/>
            <person name="Pepin K."/>
            <person name="Hillier L.W."/>
            <person name="Nelson J."/>
            <person name="Spieth J."/>
            <person name="Ryan E."/>
            <person name="Andrews S."/>
            <person name="Geisel C."/>
            <person name="Layman D."/>
            <person name="Du H."/>
            <person name="Ali J."/>
            <person name="Berghoff A."/>
            <person name="Jones K."/>
            <person name="Drone K."/>
            <person name="Cotton M."/>
            <person name="Joshu C."/>
            <person name="Antonoiu B."/>
            <person name="Zidanic M."/>
            <person name="Strong C."/>
            <person name="Sun H."/>
            <person name="Lamar B."/>
            <person name="Yordan C."/>
            <person name="Ma P."/>
            <person name="Zhong J."/>
            <person name="Preston R."/>
            <person name="Vil D."/>
            <person name="Shekher M."/>
            <person name="Matero A."/>
            <person name="Shah R."/>
            <person name="Swaby I.K."/>
            <person name="O'Shaughnessy A."/>
            <person name="Rodriguez M."/>
            <person name="Hoffman J."/>
            <person name="Till S."/>
            <person name="Granat S."/>
            <person name="Shohdy N."/>
            <person name="Hasegawa A."/>
            <person name="Hameed A."/>
            <person name="Lodhi M."/>
            <person name="Johnson A."/>
            <person name="Chen E."/>
            <person name="Marra M.A."/>
            <person name="Martienssen R."/>
            <person name="McCombie W.R."/>
        </authorList>
    </citation>
    <scope>NUCLEOTIDE SEQUENCE [LARGE SCALE GENOMIC DNA]</scope>
    <source>
        <strain>cv. Columbia</strain>
    </source>
</reference>
<reference key="3">
    <citation type="journal article" date="2017" name="Plant J.">
        <title>Araport11: a complete reannotation of the Arabidopsis thaliana reference genome.</title>
        <authorList>
            <person name="Cheng C.Y."/>
            <person name="Krishnakumar V."/>
            <person name="Chan A.P."/>
            <person name="Thibaud-Nissen F."/>
            <person name="Schobel S."/>
            <person name="Town C.D."/>
        </authorList>
    </citation>
    <scope>GENOME REANNOTATION</scope>
    <source>
        <strain>cv. Columbia</strain>
    </source>
</reference>
<reference key="4">
    <citation type="journal article" date="2003" name="Science">
        <title>Empirical analysis of transcriptional activity in the Arabidopsis genome.</title>
        <authorList>
            <person name="Yamada K."/>
            <person name="Lim J."/>
            <person name="Dale J.M."/>
            <person name="Chen H."/>
            <person name="Shinn P."/>
            <person name="Palm C.J."/>
            <person name="Southwick A.M."/>
            <person name="Wu H.C."/>
            <person name="Kim C.J."/>
            <person name="Nguyen M."/>
            <person name="Pham P.K."/>
            <person name="Cheuk R.F."/>
            <person name="Karlin-Newmann G."/>
            <person name="Liu S.X."/>
            <person name="Lam B."/>
            <person name="Sakano H."/>
            <person name="Wu T."/>
            <person name="Yu G."/>
            <person name="Miranda M."/>
            <person name="Quach H.L."/>
            <person name="Tripp M."/>
            <person name="Chang C.H."/>
            <person name="Lee J.M."/>
            <person name="Toriumi M.J."/>
            <person name="Chan M.M."/>
            <person name="Tang C.C."/>
            <person name="Onodera C.S."/>
            <person name="Deng J.M."/>
            <person name="Akiyama K."/>
            <person name="Ansari Y."/>
            <person name="Arakawa T."/>
            <person name="Banh J."/>
            <person name="Banno F."/>
            <person name="Bowser L."/>
            <person name="Brooks S.Y."/>
            <person name="Carninci P."/>
            <person name="Chao Q."/>
            <person name="Choy N."/>
            <person name="Enju A."/>
            <person name="Goldsmith A.D."/>
            <person name="Gurjal M."/>
            <person name="Hansen N.F."/>
            <person name="Hayashizaki Y."/>
            <person name="Johnson-Hopson C."/>
            <person name="Hsuan V.W."/>
            <person name="Iida K."/>
            <person name="Karnes M."/>
            <person name="Khan S."/>
            <person name="Koesema E."/>
            <person name="Ishida J."/>
            <person name="Jiang P.X."/>
            <person name="Jones T."/>
            <person name="Kawai J."/>
            <person name="Kamiya A."/>
            <person name="Meyers C."/>
            <person name="Nakajima M."/>
            <person name="Narusaka M."/>
            <person name="Seki M."/>
            <person name="Sakurai T."/>
            <person name="Satou M."/>
            <person name="Tamse R."/>
            <person name="Vaysberg M."/>
            <person name="Wallender E.K."/>
            <person name="Wong C."/>
            <person name="Yamamura Y."/>
            <person name="Yuan S."/>
            <person name="Shinozaki K."/>
            <person name="Davis R.W."/>
            <person name="Theologis A."/>
            <person name="Ecker J.R."/>
        </authorList>
    </citation>
    <scope>NUCLEOTIDE SEQUENCE [LARGE SCALE MRNA]</scope>
    <source>
        <strain>cv. Columbia</strain>
    </source>
</reference>
<reference key="5">
    <citation type="journal article" date="1996" name="Biochim. Biophys. Acta">
        <title>Arabidopsis thaliana cDNA isolated by functional complementation shows homology to serine/threonine protein kinases.</title>
        <authorList>
            <person name="Covic L."/>
            <person name="Lew R.R."/>
        </authorList>
    </citation>
    <scope>NUCLEOTIDE SEQUENCE [GENOMIC DNA] OF 115-608</scope>
</reference>
<reference key="6">
    <citation type="journal article" date="1999" name="Biochim. Biophys. Acta">
        <title>Functional characterization of ARAKIN (ATMEKK1): a possible mediator in an osmotic stress response pathway in higher plants.</title>
        <authorList>
            <person name="Covic L."/>
            <person name="Silva N.F."/>
            <person name="Lew R.R."/>
        </authorList>
    </citation>
    <scope>INDUCTION</scope>
</reference>
<reference key="7">
    <citation type="journal article" date="1998" name="Biochem. Biophys. Res. Commun.">
        <title>Isolation of ATMEKK1 (a MAP kinase kinase kinase)-interacting proteins and analysis of a MAP kinase cascade in Arabidopsis.</title>
        <authorList>
            <person name="Ichimura K."/>
            <person name="Mizoguchi T."/>
            <person name="Irie K."/>
            <person name="Morris P.C."/>
            <person name="Giraudat J."/>
            <person name="Matsumoto K."/>
            <person name="Shinozaki K."/>
        </authorList>
    </citation>
    <scope>SUBUNIT</scope>
    <scope>INTERACTION WITH MKK1; MMK2 AND MPK4</scope>
</reference>
<reference key="8">
    <citation type="journal article" date="2002" name="Nature">
        <title>MAP kinase signalling cascade in Arabidopsis innate immunity.</title>
        <authorList>
            <person name="Asai T."/>
            <person name="Tena G."/>
            <person name="Plotnikova J."/>
            <person name="Willmann M.R."/>
            <person name="Chiu W.-L."/>
            <person name="Gomez-Gomez L."/>
            <person name="Boller T."/>
            <person name="Ausubel F.M."/>
            <person name="Sheen J."/>
        </authorList>
    </citation>
    <scope>FUNCTION</scope>
</reference>
<reference key="9">
    <citation type="journal article" date="2002" name="Trends Plant Sci.">
        <title>Mitogen-activated protein kinase cascades in plants: a new nomenclature.</title>
        <authorList>
            <consortium name="MAPK group"/>
        </authorList>
    </citation>
    <scope>NOMENCLATURE</scope>
</reference>
<reference key="10">
    <citation type="journal article" date="2004" name="Mol. Cell">
        <title>The MKK2 pathway mediates cold and salt stress signaling in Arabidopsis.</title>
        <authorList>
            <person name="Teige M."/>
            <person name="Scheikl E."/>
            <person name="Eulgem T."/>
            <person name="Doczi R."/>
            <person name="Ichimura K."/>
            <person name="Shinozaki K."/>
            <person name="Dangl J.L."/>
            <person name="Hirt H."/>
        </authorList>
    </citation>
    <scope>FUNCTION</scope>
</reference>
<reference key="11">
    <citation type="journal article" date="2008" name="Cell Res.">
        <title>MEKK1, MKK1/MKK2 and MPK4 function together in a mitogen-activated protein kinase cascade to regulate innate immunity in plants.</title>
        <authorList>
            <person name="Gao M."/>
            <person name="Liu J."/>
            <person name="Bi D."/>
            <person name="Zhang Z."/>
            <person name="Cheng F."/>
            <person name="Chen S."/>
            <person name="Zhang Y."/>
        </authorList>
    </citation>
    <scope>FUNCTION</scope>
    <scope>INTERACTION WITH MKK1; MKK2 AND MPK4</scope>
</reference>
<reference key="12">
    <citation type="journal article" date="2010" name="Plant Signal. Behav.">
        <title>Calcium/calmodulin-regulated receptor-like kinase CRLK1 interacts with MEKK1 in plants.</title>
        <authorList>
            <person name="Yang T."/>
            <person name="Shad Ali G."/>
            <person name="Yang L."/>
            <person name="Du L."/>
            <person name="Reddy A.S."/>
            <person name="Poovaiah B.W."/>
        </authorList>
    </citation>
    <scope>INTERACTION WITH CRLK1</scope>
    <scope>SUBCELLULAR LOCATION</scope>
</reference>
<reference key="13">
    <citation type="journal article" date="2013" name="J. Plant Res.">
        <title>Phosphorylation of Arabidopsis thaliana MEKK1 via Ca(2+) signaling as a part of the cold stress response.</title>
        <authorList>
            <person name="Furuya T."/>
            <person name="Matsuoka D."/>
            <person name="Nanmori T."/>
        </authorList>
    </citation>
    <scope>CATALYTIC ACTIVITY</scope>
    <scope>ACTIVITY REGULATION</scope>
    <scope>PHOSPHORYLATION</scope>
    <source>
        <strain>cv. Columbia</strain>
    </source>
</reference>
<reference key="14">
    <citation type="journal article" date="2015" name="Nature">
        <title>Pathogen-secreted proteases activate a novel plant immune pathway.</title>
        <authorList>
            <person name="Cheng Z."/>
            <person name="Li J.F."/>
            <person name="Niu Y."/>
            <person name="Zhang X.C."/>
            <person name="Woody O.Z."/>
            <person name="Xiong Y."/>
            <person name="Djonovic S."/>
            <person name="Millet Y."/>
            <person name="Bush J."/>
            <person name="McConkey B.J."/>
            <person name="Sheen J."/>
            <person name="Ausubel F.M."/>
        </authorList>
    </citation>
    <scope>INTERACTION WITH RACK1A; RACK1B AND RACK1C</scope>
</reference>
<dbReference type="EC" id="2.7.11.25" evidence="10"/>
<dbReference type="EMBL" id="D50468">
    <property type="protein sequence ID" value="BAA09057.1"/>
    <property type="molecule type" value="mRNA"/>
</dbReference>
<dbReference type="EMBL" id="AF076275">
    <property type="protein sequence ID" value="AAC28196.1"/>
    <property type="molecule type" value="Genomic_DNA"/>
</dbReference>
<dbReference type="EMBL" id="AL161511">
    <property type="protein sequence ID" value="CAB77975.1"/>
    <property type="molecule type" value="Genomic_DNA"/>
</dbReference>
<dbReference type="EMBL" id="CP002687">
    <property type="protein sequence ID" value="AEE82651.1"/>
    <property type="molecule type" value="Genomic_DNA"/>
</dbReference>
<dbReference type="EMBL" id="AY062459">
    <property type="protein sequence ID" value="AAL32537.1"/>
    <property type="molecule type" value="mRNA"/>
</dbReference>
<dbReference type="EMBL" id="BT000116">
    <property type="protein sequence ID" value="AAN15435.1"/>
    <property type="molecule type" value="mRNA"/>
</dbReference>
<dbReference type="EMBL" id="L43125">
    <property type="protein sequence ID" value="AAA99196.1"/>
    <property type="status" value="ALT_SEQ"/>
    <property type="molecule type" value="Genomic_DNA"/>
</dbReference>
<dbReference type="PIR" id="T01833">
    <property type="entry name" value="T01833"/>
</dbReference>
<dbReference type="RefSeq" id="NP_192590.1">
    <property type="nucleotide sequence ID" value="NM_116919.4"/>
</dbReference>
<dbReference type="SMR" id="Q39008"/>
<dbReference type="BioGRID" id="11709">
    <property type="interactions" value="9"/>
</dbReference>
<dbReference type="FunCoup" id="Q39008">
    <property type="interactions" value="1637"/>
</dbReference>
<dbReference type="IntAct" id="Q39008">
    <property type="interactions" value="3"/>
</dbReference>
<dbReference type="STRING" id="3702.Q39008"/>
<dbReference type="GlyGen" id="Q39008">
    <property type="glycosylation" value="1 site"/>
</dbReference>
<dbReference type="iPTMnet" id="Q39008"/>
<dbReference type="PaxDb" id="3702-AT4G08500.1"/>
<dbReference type="ProteomicsDB" id="238790"/>
<dbReference type="EnsemblPlants" id="AT4G08500.1">
    <property type="protein sequence ID" value="AT4G08500.1"/>
    <property type="gene ID" value="AT4G08500"/>
</dbReference>
<dbReference type="GeneID" id="826409"/>
<dbReference type="Gramene" id="AT4G08500.1">
    <property type="protein sequence ID" value="AT4G08500.1"/>
    <property type="gene ID" value="AT4G08500"/>
</dbReference>
<dbReference type="KEGG" id="ath:AT4G08500"/>
<dbReference type="Araport" id="AT4G08500"/>
<dbReference type="TAIR" id="AT4G08500">
    <property type="gene designation" value="MEKK1"/>
</dbReference>
<dbReference type="eggNOG" id="KOG0198">
    <property type="taxonomic scope" value="Eukaryota"/>
</dbReference>
<dbReference type="HOGENOM" id="CLU_000288_2_6_1"/>
<dbReference type="InParanoid" id="Q39008"/>
<dbReference type="OMA" id="HIDYEAA"/>
<dbReference type="PhylomeDB" id="Q39008"/>
<dbReference type="BRENDA" id="2.7.11.25">
    <property type="organism ID" value="399"/>
</dbReference>
<dbReference type="PRO" id="PR:Q39008"/>
<dbReference type="Proteomes" id="UP000006548">
    <property type="component" value="Chromosome 4"/>
</dbReference>
<dbReference type="ExpressionAtlas" id="Q39008">
    <property type="expression patterns" value="baseline and differential"/>
</dbReference>
<dbReference type="GO" id="GO:0005768">
    <property type="term" value="C:endosome"/>
    <property type="evidence" value="ECO:0000314"/>
    <property type="project" value="UniProtKB"/>
</dbReference>
<dbReference type="GO" id="GO:0005634">
    <property type="term" value="C:nucleus"/>
    <property type="evidence" value="ECO:0000314"/>
    <property type="project" value="TAIR"/>
</dbReference>
<dbReference type="GO" id="GO:0005886">
    <property type="term" value="C:plasma membrane"/>
    <property type="evidence" value="ECO:0000314"/>
    <property type="project" value="UniProtKB"/>
</dbReference>
<dbReference type="GO" id="GO:0005524">
    <property type="term" value="F:ATP binding"/>
    <property type="evidence" value="ECO:0007669"/>
    <property type="project" value="UniProtKB-KW"/>
</dbReference>
<dbReference type="GO" id="GO:0003677">
    <property type="term" value="F:DNA binding"/>
    <property type="evidence" value="ECO:0000314"/>
    <property type="project" value="TAIR"/>
</dbReference>
<dbReference type="GO" id="GO:0019900">
    <property type="term" value="F:kinase binding"/>
    <property type="evidence" value="ECO:0000353"/>
    <property type="project" value="TAIR"/>
</dbReference>
<dbReference type="GO" id="GO:0004709">
    <property type="term" value="F:MAP kinase kinase kinase activity"/>
    <property type="evidence" value="ECO:0000314"/>
    <property type="project" value="UniProtKB"/>
</dbReference>
<dbReference type="GO" id="GO:0106310">
    <property type="term" value="F:protein serine kinase activity"/>
    <property type="evidence" value="ECO:0007669"/>
    <property type="project" value="RHEA"/>
</dbReference>
<dbReference type="GO" id="GO:0004674">
    <property type="term" value="F:protein serine/threonine kinase activity"/>
    <property type="evidence" value="ECO:0000314"/>
    <property type="project" value="UniProtKB"/>
</dbReference>
<dbReference type="GO" id="GO:0009631">
    <property type="term" value="P:cold acclimation"/>
    <property type="evidence" value="ECO:0000314"/>
    <property type="project" value="UniProtKB"/>
</dbReference>
<dbReference type="GO" id="GO:0045087">
    <property type="term" value="P:innate immune response"/>
    <property type="evidence" value="ECO:0007669"/>
    <property type="project" value="UniProtKB-KW"/>
</dbReference>
<dbReference type="GO" id="GO:0000165">
    <property type="term" value="P:MAPK cascade"/>
    <property type="evidence" value="ECO:0000315"/>
    <property type="project" value="TAIR"/>
</dbReference>
<dbReference type="GO" id="GO:0046777">
    <property type="term" value="P:protein autophosphorylation"/>
    <property type="evidence" value="ECO:0007005"/>
    <property type="project" value="TAIR"/>
</dbReference>
<dbReference type="GO" id="GO:0009409">
    <property type="term" value="P:response to cold"/>
    <property type="evidence" value="ECO:0000314"/>
    <property type="project" value="UniProtKB"/>
</dbReference>
<dbReference type="GO" id="GO:1902065">
    <property type="term" value="P:response to L-glutamate"/>
    <property type="evidence" value="ECO:0000315"/>
    <property type="project" value="TAIR"/>
</dbReference>
<dbReference type="GO" id="GO:0006970">
    <property type="term" value="P:response to osmotic stress"/>
    <property type="evidence" value="ECO:0000270"/>
    <property type="project" value="TAIR"/>
</dbReference>
<dbReference type="GO" id="GO:0009651">
    <property type="term" value="P:response to salt stress"/>
    <property type="evidence" value="ECO:0000270"/>
    <property type="project" value="TAIR"/>
</dbReference>
<dbReference type="GO" id="GO:0009611">
    <property type="term" value="P:response to wounding"/>
    <property type="evidence" value="ECO:0000314"/>
    <property type="project" value="TAIR"/>
</dbReference>
<dbReference type="GO" id="GO:0010449">
    <property type="term" value="P:root meristem growth"/>
    <property type="evidence" value="ECO:0000316"/>
    <property type="project" value="TAIR"/>
</dbReference>
<dbReference type="GO" id="GO:0022622">
    <property type="term" value="P:root system development"/>
    <property type="evidence" value="ECO:0000315"/>
    <property type="project" value="TAIR"/>
</dbReference>
<dbReference type="CDD" id="cd06632">
    <property type="entry name" value="STKc_MEKK1_plant"/>
    <property type="match status" value="1"/>
</dbReference>
<dbReference type="FunFam" id="1.10.510.10:FF:000359">
    <property type="entry name" value="Mitogen-activated protein kinase 1, putative, expressed"/>
    <property type="match status" value="1"/>
</dbReference>
<dbReference type="Gene3D" id="1.10.510.10">
    <property type="entry name" value="Transferase(Phosphotransferase) domain 1"/>
    <property type="match status" value="1"/>
</dbReference>
<dbReference type="InterPro" id="IPR011009">
    <property type="entry name" value="Kinase-like_dom_sf"/>
</dbReference>
<dbReference type="InterPro" id="IPR050538">
    <property type="entry name" value="MAP_kinase_kinase_kinase"/>
</dbReference>
<dbReference type="InterPro" id="IPR000719">
    <property type="entry name" value="Prot_kinase_dom"/>
</dbReference>
<dbReference type="InterPro" id="IPR017441">
    <property type="entry name" value="Protein_kinase_ATP_BS"/>
</dbReference>
<dbReference type="InterPro" id="IPR008271">
    <property type="entry name" value="Ser/Thr_kinase_AS"/>
</dbReference>
<dbReference type="PANTHER" id="PTHR48016">
    <property type="entry name" value="MAP KINASE KINASE KINASE SSK2-RELATED-RELATED"/>
    <property type="match status" value="1"/>
</dbReference>
<dbReference type="PANTHER" id="PTHR48016:SF29">
    <property type="entry name" value="MITOGEN-ACTIVATED PROTEIN KINASE KINASE KINASE 1-RELATED"/>
    <property type="match status" value="1"/>
</dbReference>
<dbReference type="Pfam" id="PF00069">
    <property type="entry name" value="Pkinase"/>
    <property type="match status" value="1"/>
</dbReference>
<dbReference type="SMART" id="SM00220">
    <property type="entry name" value="S_TKc"/>
    <property type="match status" value="1"/>
</dbReference>
<dbReference type="SUPFAM" id="SSF56112">
    <property type="entry name" value="Protein kinase-like (PK-like)"/>
    <property type="match status" value="1"/>
</dbReference>
<dbReference type="PROSITE" id="PS00107">
    <property type="entry name" value="PROTEIN_KINASE_ATP"/>
    <property type="match status" value="1"/>
</dbReference>
<dbReference type="PROSITE" id="PS50011">
    <property type="entry name" value="PROTEIN_KINASE_DOM"/>
    <property type="match status" value="1"/>
</dbReference>
<dbReference type="PROSITE" id="PS00108">
    <property type="entry name" value="PROTEIN_KINASE_ST"/>
    <property type="match status" value="1"/>
</dbReference>
<organism>
    <name type="scientific">Arabidopsis thaliana</name>
    <name type="common">Mouse-ear cress</name>
    <dbReference type="NCBI Taxonomy" id="3702"/>
    <lineage>
        <taxon>Eukaryota</taxon>
        <taxon>Viridiplantae</taxon>
        <taxon>Streptophyta</taxon>
        <taxon>Embryophyta</taxon>
        <taxon>Tracheophyta</taxon>
        <taxon>Spermatophyta</taxon>
        <taxon>Magnoliopsida</taxon>
        <taxon>eudicotyledons</taxon>
        <taxon>Gunneridae</taxon>
        <taxon>Pentapetalae</taxon>
        <taxon>rosids</taxon>
        <taxon>malvids</taxon>
        <taxon>Brassicales</taxon>
        <taxon>Brassicaceae</taxon>
        <taxon>Camelineae</taxon>
        <taxon>Arabidopsis</taxon>
    </lineage>
</organism>
<sequence length="608" mass="66024">MDRILARMKKSTGRRGGDKNITPVRRLERRDAARNINYDAASCSSSSAEDLSVSTSSLMTRSLEFPEPTSFRIGGGVGEMDRIYRSLGVSGPDDLAISFDAWEACKKRSSSDVVNRFKSFDLDKVRDQDLSEEGPSGVVVGSDSMNHKVQGQDLSEAGPSGGIVTELSEIGNLITPVDRLVADGVVENRRVMERTPTIVKSKGYLVPNNVVAVGVGVGGGIKGLRPPVLKPPPAMKRPPIDHRGSSWDFLTHFAPSETVKRPSSSSSSSEDGCDEEEGKEEEAEAEEMGARFIQLGDTADETCSFTTNEGDSSSTVSNTSPIYPDGGAIITSWQKGQLLGRGSFGSVYEGISGDGDFFAVKEVSLLDQGSQAQECIQQLEGEIKLLSQLQHQNIVRYRGTAKDGSNLYIFLELVTQGSLLKLYQRYQLRDSVVSLYTRQILDGLKYLHDKGFIHRDIKCANILVDANGAVKLADFGLAKVSKFNDIKSCKGTPFWMAPEVINRKDSDGYGSPADIWSLGCTVLEMCTGQIPYSDLEPVQALFRIGRGTLPEVPDTLSLDARLFILKCLKVNPEERPTAAELLNHPFVRRPLPSVGSGGSGSASPLLRR</sequence>
<keyword id="KW-0067">ATP-binding</keyword>
<keyword id="KW-1003">Cell membrane</keyword>
<keyword id="KW-0967">Endosome</keyword>
<keyword id="KW-0391">Immunity</keyword>
<keyword id="KW-0399">Innate immunity</keyword>
<keyword id="KW-0418">Kinase</keyword>
<keyword id="KW-0472">Membrane</keyword>
<keyword id="KW-0547">Nucleotide-binding</keyword>
<keyword id="KW-0597">Phosphoprotein</keyword>
<keyword id="KW-0611">Plant defense</keyword>
<keyword id="KW-1185">Reference proteome</keyword>
<keyword id="KW-0723">Serine/threonine-protein kinase</keyword>
<keyword id="KW-0346">Stress response</keyword>
<keyword id="KW-0808">Transferase</keyword>
<protein>
    <recommendedName>
        <fullName>Mitogen-activated protein kinase kinase kinase 1</fullName>
        <shortName>ARAKIN</shortName>
        <shortName>AtMEKK1</shortName>
        <shortName>MAP kinase kinase kinase 1</shortName>
        <ecNumber evidence="10">2.7.11.25</ecNumber>
    </recommendedName>
</protein>
<evidence type="ECO:0000250" key="1">
    <source>
        <dbReference type="UniProtKB" id="O81472"/>
    </source>
</evidence>
<evidence type="ECO:0000255" key="2">
    <source>
        <dbReference type="PROSITE-ProRule" id="PRU00159"/>
    </source>
</evidence>
<evidence type="ECO:0000255" key="3">
    <source>
        <dbReference type="PROSITE-ProRule" id="PRU10027"/>
    </source>
</evidence>
<evidence type="ECO:0000256" key="4">
    <source>
        <dbReference type="SAM" id="MobiDB-lite"/>
    </source>
</evidence>
<evidence type="ECO:0000269" key="5">
    <source>
    </source>
</evidence>
<evidence type="ECO:0000269" key="6">
    <source>
    </source>
</evidence>
<evidence type="ECO:0000269" key="7">
    <source>
    </source>
</evidence>
<evidence type="ECO:0000269" key="8">
    <source>
    </source>
</evidence>
<evidence type="ECO:0000269" key="9">
    <source>
    </source>
</evidence>
<evidence type="ECO:0000269" key="10">
    <source>
    </source>
</evidence>
<evidence type="ECO:0000269" key="11">
    <source>
    </source>
</evidence>
<evidence type="ECO:0000269" key="12">
    <source>
    </source>
</evidence>
<evidence type="ECO:0000269" key="13">
    <source>
    </source>
</evidence>
<evidence type="ECO:0000305" key="14"/>
<feature type="chain" id="PRO_0000245826" description="Mitogen-activated protein kinase kinase kinase 1">
    <location>
        <begin position="1"/>
        <end position="608"/>
    </location>
</feature>
<feature type="domain" description="Protein kinase" evidence="2">
    <location>
        <begin position="333"/>
        <end position="587"/>
    </location>
</feature>
<feature type="region of interest" description="Regulatory region" evidence="13">
    <location>
        <begin position="1"/>
        <end position="325"/>
    </location>
</feature>
<feature type="region of interest" description="Disordered" evidence="4">
    <location>
        <begin position="1"/>
        <end position="20"/>
    </location>
</feature>
<feature type="region of interest" description="Binding with MPK4" evidence="13">
    <location>
        <begin position="192"/>
        <end position="234"/>
    </location>
</feature>
<feature type="region of interest" description="Disordered" evidence="4">
    <location>
        <begin position="228"/>
        <end position="247"/>
    </location>
</feature>
<feature type="region of interest" description="Disordered" evidence="4">
    <location>
        <begin position="256"/>
        <end position="287"/>
    </location>
</feature>
<feature type="compositionally biased region" description="Basic residues" evidence="4">
    <location>
        <begin position="1"/>
        <end position="13"/>
    </location>
</feature>
<feature type="compositionally biased region" description="Acidic residues" evidence="4">
    <location>
        <begin position="271"/>
        <end position="287"/>
    </location>
</feature>
<feature type="active site" description="Proton acceptor" evidence="2 3">
    <location>
        <position position="456"/>
    </location>
</feature>
<feature type="binding site" evidence="2">
    <location>
        <begin position="339"/>
        <end position="347"/>
    </location>
    <ligand>
        <name>ATP</name>
        <dbReference type="ChEBI" id="CHEBI:30616"/>
    </ligand>
</feature>
<feature type="binding site" evidence="2">
    <location>
        <position position="361"/>
    </location>
    <ligand>
        <name>ATP</name>
        <dbReference type="ChEBI" id="CHEBI:30616"/>
    </ligand>
</feature>
<feature type="modified residue" description="Phosphoserine" evidence="1">
    <location>
        <position position="62"/>
    </location>
</feature>
<feature type="modified residue" description="Phosphoserine" evidence="1">
    <location>
        <position position="603"/>
    </location>
</feature>
<feature type="sequence conflict" description="In Ref. 1; AAC28196." evidence="14" ref="1">
    <original>D</original>
    <variation>A</variation>
    <location>
        <position position="39"/>
    </location>
</feature>
<feature type="sequence conflict" description="In Ref. 4; AAL32537/AAN15435." evidence="14" ref="4">
    <original>R</original>
    <variation>L</variation>
    <location>
        <position position="341"/>
    </location>
</feature>
<comment type="function">
    <text evidence="6 7 8 10">The MEKK1, MKK1/MKK2 and MPK4 function in a signaling pathway that modulates the expression of genes responding to biotic and abiotic stresses and also plays an important role in pathogen defense by negatively regulating innate immunity. Involved in the innate immune MAP kinase signaling cascade (MEKK1, MKK4/MKK5 and MPK3/MPK6) downstream of bacterial flagellin receptor FLS2. May be involved in the cold and salinity stress-mediated MAP kinase signaling cascade (MEKK1, MKK1/MKK2 and MPK4/MPK6). Activates by phosphorylation the downstream MKK2, MKK4 and MKK5 in a calcium-dependent manner.</text>
</comment>
<comment type="catalytic activity">
    <reaction evidence="10">
        <text>L-seryl-[protein] + ATP = O-phospho-L-seryl-[protein] + ADP + H(+)</text>
        <dbReference type="Rhea" id="RHEA:17989"/>
        <dbReference type="Rhea" id="RHEA-COMP:9863"/>
        <dbReference type="Rhea" id="RHEA-COMP:11604"/>
        <dbReference type="ChEBI" id="CHEBI:15378"/>
        <dbReference type="ChEBI" id="CHEBI:29999"/>
        <dbReference type="ChEBI" id="CHEBI:30616"/>
        <dbReference type="ChEBI" id="CHEBI:83421"/>
        <dbReference type="ChEBI" id="CHEBI:456216"/>
        <dbReference type="EC" id="2.7.11.25"/>
    </reaction>
</comment>
<comment type="catalytic activity">
    <reaction evidence="10">
        <text>L-threonyl-[protein] + ATP = O-phospho-L-threonyl-[protein] + ADP + H(+)</text>
        <dbReference type="Rhea" id="RHEA:46608"/>
        <dbReference type="Rhea" id="RHEA-COMP:11060"/>
        <dbReference type="Rhea" id="RHEA-COMP:11605"/>
        <dbReference type="ChEBI" id="CHEBI:15378"/>
        <dbReference type="ChEBI" id="CHEBI:30013"/>
        <dbReference type="ChEBI" id="CHEBI:30616"/>
        <dbReference type="ChEBI" id="CHEBI:61977"/>
        <dbReference type="ChEBI" id="CHEBI:456216"/>
        <dbReference type="EC" id="2.7.11.25"/>
    </reaction>
</comment>
<comment type="activity regulation">
    <text evidence="10">Activated by cold via CRLK1-mediated phosphorylation and leading to elevated kinase activity towards MKK2.</text>
</comment>
<comment type="subunit">
    <text evidence="8 9 11 13">Interacts with MKK1, MMK2 and MPK4. May form a ternary complex composed of MEKK1 and MKK1/MKK2 and MPK4 (PubMed:18982020, PubMed:9878570). Interacts with RACK1A, RACK1B and RACK1C (PubMed:25731164). Binds to CRLK1 (PubMed:20724845).</text>
</comment>
<comment type="interaction">
    <interactant intactId="EBI-994439">
        <id>Q39008</id>
    </interactant>
    <interactant intactId="EBI-994464">
        <id>Q94A06</id>
        <label>MKK1</label>
    </interactant>
    <organismsDiffer>false</organismsDiffer>
    <experiments>4</experiments>
</comment>
<comment type="interaction">
    <interactant intactId="EBI-994439">
        <id>Q39008</id>
    </interactant>
    <interactant intactId="EBI-1235980">
        <id>Q9SUP6</id>
        <label>WRKY53</label>
    </interactant>
    <organismsDiffer>false</organismsDiffer>
    <experiments>5</experiments>
</comment>
<comment type="subcellular location">
    <subcellularLocation>
        <location evidence="9">Cell membrane</location>
    </subcellularLocation>
    <subcellularLocation>
        <location evidence="9">Endosome</location>
    </subcellularLocation>
</comment>
<comment type="induction">
    <text evidence="5 12">By touch, cold and salinity stress.</text>
</comment>
<comment type="PTM">
    <text evidence="10">Phosphorylated by CRLK1 in response to cold.</text>
</comment>
<comment type="similarity">
    <text evidence="14">Belongs to the protein kinase superfamily. STE Ser/Thr protein kinase family. MAP kinase kinase kinase subfamily.</text>
</comment>
<comment type="sequence caution" evidence="14">
    <conflict type="frameshift">
        <sequence resource="EMBL-CDS" id="AAA99196"/>
    </conflict>
</comment>
<comment type="sequence caution" evidence="14">
    <conflict type="miscellaneous discrepancy">
        <sequence resource="EMBL-CDS" id="AAA99196"/>
    </conflict>
    <text>Sequencing errors.</text>
</comment>